<reference key="1">
    <citation type="submission" date="2008-02" db="EMBL/GenBank/DDBJ databases">
        <title>Complete sequence of chromosome 1 of Burkholderia cenocepacia MC0-3.</title>
        <authorList>
            <person name="Copeland A."/>
            <person name="Lucas S."/>
            <person name="Lapidus A."/>
            <person name="Barry K."/>
            <person name="Bruce D."/>
            <person name="Goodwin L."/>
            <person name="Glavina del Rio T."/>
            <person name="Dalin E."/>
            <person name="Tice H."/>
            <person name="Pitluck S."/>
            <person name="Chain P."/>
            <person name="Malfatti S."/>
            <person name="Shin M."/>
            <person name="Vergez L."/>
            <person name="Schmutz J."/>
            <person name="Larimer F."/>
            <person name="Land M."/>
            <person name="Hauser L."/>
            <person name="Kyrpides N."/>
            <person name="Mikhailova N."/>
            <person name="Tiedje J."/>
            <person name="Richardson P."/>
        </authorList>
    </citation>
    <scope>NUCLEOTIDE SEQUENCE [LARGE SCALE GENOMIC DNA]</scope>
    <source>
        <strain>MC0-3</strain>
    </source>
</reference>
<organism>
    <name type="scientific">Burkholderia orbicola (strain MC0-3)</name>
    <dbReference type="NCBI Taxonomy" id="406425"/>
    <lineage>
        <taxon>Bacteria</taxon>
        <taxon>Pseudomonadati</taxon>
        <taxon>Pseudomonadota</taxon>
        <taxon>Betaproteobacteria</taxon>
        <taxon>Burkholderiales</taxon>
        <taxon>Burkholderiaceae</taxon>
        <taxon>Burkholderia</taxon>
        <taxon>Burkholderia cepacia complex</taxon>
        <taxon>Burkholderia orbicola</taxon>
    </lineage>
</organism>
<sequence>MSEPIDLSQIAPTLKAEILAEALPYIRRYHGKTVVIKYGGNAMTEERLKQGFARDVILLKLVGINPVIVHGGGPQIDHALKKIGKAGTFIQGMRVTDEETMEVVEWVLGGEVQQDIVMLINHFGGHAVGLTGKDGGLIHARKLLMPDRDNPGQYIDIGQVGEVEAINPAVVKALQDDAFIPVISPIGFGEDGLSYNINADLVAGKLATVLNAEKLLMMTNIPGVMDKDGNLLTDLSAREIDALFEDGTISGGMLPKISSALDAAKSGVKSVHIVDGRIEHSVLLEILTEQPFGTMIRSH</sequence>
<protein>
    <recommendedName>
        <fullName evidence="1">Acetylglutamate kinase</fullName>
        <ecNumber evidence="1">2.7.2.8</ecNumber>
    </recommendedName>
    <alternativeName>
        <fullName evidence="1">N-acetyl-L-glutamate 5-phosphotransferase</fullName>
    </alternativeName>
    <alternativeName>
        <fullName evidence="1">NAG kinase</fullName>
        <shortName evidence="1">NAGK</shortName>
    </alternativeName>
</protein>
<keyword id="KW-0028">Amino-acid biosynthesis</keyword>
<keyword id="KW-0055">Arginine biosynthesis</keyword>
<keyword id="KW-0067">ATP-binding</keyword>
<keyword id="KW-0963">Cytoplasm</keyword>
<keyword id="KW-0418">Kinase</keyword>
<keyword id="KW-0547">Nucleotide-binding</keyword>
<keyword id="KW-0808">Transferase</keyword>
<comment type="function">
    <text evidence="1">Catalyzes the ATP-dependent phosphorylation of N-acetyl-L-glutamate.</text>
</comment>
<comment type="catalytic activity">
    <reaction evidence="1">
        <text>N-acetyl-L-glutamate + ATP = N-acetyl-L-glutamyl 5-phosphate + ADP</text>
        <dbReference type="Rhea" id="RHEA:14629"/>
        <dbReference type="ChEBI" id="CHEBI:30616"/>
        <dbReference type="ChEBI" id="CHEBI:44337"/>
        <dbReference type="ChEBI" id="CHEBI:57936"/>
        <dbReference type="ChEBI" id="CHEBI:456216"/>
        <dbReference type="EC" id="2.7.2.8"/>
    </reaction>
</comment>
<comment type="pathway">
    <text evidence="1">Amino-acid biosynthesis; L-arginine biosynthesis; N(2)-acetyl-L-ornithine from L-glutamate: step 2/4.</text>
</comment>
<comment type="subcellular location">
    <subcellularLocation>
        <location evidence="1">Cytoplasm</location>
    </subcellularLocation>
</comment>
<comment type="similarity">
    <text evidence="1">Belongs to the acetylglutamate kinase family. ArgB subfamily.</text>
</comment>
<proteinExistence type="inferred from homology"/>
<gene>
    <name evidence="1" type="primary">argB</name>
    <name type="ordered locus">Bcenmc03_3112</name>
</gene>
<accession>B1K0G5</accession>
<evidence type="ECO:0000255" key="1">
    <source>
        <dbReference type="HAMAP-Rule" id="MF_00082"/>
    </source>
</evidence>
<feature type="chain" id="PRO_1000092850" description="Acetylglutamate kinase">
    <location>
        <begin position="1"/>
        <end position="299"/>
    </location>
</feature>
<feature type="binding site" evidence="1">
    <location>
        <begin position="72"/>
        <end position="73"/>
    </location>
    <ligand>
        <name>substrate</name>
    </ligand>
</feature>
<feature type="binding site" evidence="1">
    <location>
        <position position="94"/>
    </location>
    <ligand>
        <name>substrate</name>
    </ligand>
</feature>
<feature type="binding site" evidence="1">
    <location>
        <position position="196"/>
    </location>
    <ligand>
        <name>substrate</name>
    </ligand>
</feature>
<feature type="site" description="Transition state stabilizer" evidence="1">
    <location>
        <position position="37"/>
    </location>
</feature>
<feature type="site" description="Transition state stabilizer" evidence="1">
    <location>
        <position position="256"/>
    </location>
</feature>
<dbReference type="EC" id="2.7.2.8" evidence="1"/>
<dbReference type="EMBL" id="CP000958">
    <property type="protein sequence ID" value="ACA92270.1"/>
    <property type="molecule type" value="Genomic_DNA"/>
</dbReference>
<dbReference type="RefSeq" id="WP_006490510.1">
    <property type="nucleotide sequence ID" value="NC_010508.1"/>
</dbReference>
<dbReference type="SMR" id="B1K0G5"/>
<dbReference type="GeneID" id="98103597"/>
<dbReference type="KEGG" id="bcm:Bcenmc03_3112"/>
<dbReference type="HOGENOM" id="CLU_053680_0_0_4"/>
<dbReference type="UniPathway" id="UPA00068">
    <property type="reaction ID" value="UER00107"/>
</dbReference>
<dbReference type="Proteomes" id="UP000002169">
    <property type="component" value="Chromosome 1"/>
</dbReference>
<dbReference type="GO" id="GO:0005737">
    <property type="term" value="C:cytoplasm"/>
    <property type="evidence" value="ECO:0007669"/>
    <property type="project" value="UniProtKB-SubCell"/>
</dbReference>
<dbReference type="GO" id="GO:0003991">
    <property type="term" value="F:acetylglutamate kinase activity"/>
    <property type="evidence" value="ECO:0007669"/>
    <property type="project" value="UniProtKB-UniRule"/>
</dbReference>
<dbReference type="GO" id="GO:0005524">
    <property type="term" value="F:ATP binding"/>
    <property type="evidence" value="ECO:0007669"/>
    <property type="project" value="UniProtKB-UniRule"/>
</dbReference>
<dbReference type="GO" id="GO:0042450">
    <property type="term" value="P:arginine biosynthetic process via ornithine"/>
    <property type="evidence" value="ECO:0007669"/>
    <property type="project" value="UniProtKB-UniRule"/>
</dbReference>
<dbReference type="GO" id="GO:0006526">
    <property type="term" value="P:L-arginine biosynthetic process"/>
    <property type="evidence" value="ECO:0007669"/>
    <property type="project" value="UniProtKB-UniPathway"/>
</dbReference>
<dbReference type="CDD" id="cd04250">
    <property type="entry name" value="AAK_NAGK-C"/>
    <property type="match status" value="1"/>
</dbReference>
<dbReference type="FunFam" id="3.40.1160.10:FF:000004">
    <property type="entry name" value="Acetylglutamate kinase"/>
    <property type="match status" value="1"/>
</dbReference>
<dbReference type="Gene3D" id="3.40.1160.10">
    <property type="entry name" value="Acetylglutamate kinase-like"/>
    <property type="match status" value="1"/>
</dbReference>
<dbReference type="HAMAP" id="MF_00082">
    <property type="entry name" value="ArgB"/>
    <property type="match status" value="1"/>
</dbReference>
<dbReference type="InterPro" id="IPR036393">
    <property type="entry name" value="AceGlu_kinase-like_sf"/>
</dbReference>
<dbReference type="InterPro" id="IPR004662">
    <property type="entry name" value="AcgluKinase_fam"/>
</dbReference>
<dbReference type="InterPro" id="IPR037528">
    <property type="entry name" value="ArgB"/>
</dbReference>
<dbReference type="InterPro" id="IPR001048">
    <property type="entry name" value="Asp/Glu/Uridylate_kinase"/>
</dbReference>
<dbReference type="InterPro" id="IPR041727">
    <property type="entry name" value="NAGK-C"/>
</dbReference>
<dbReference type="NCBIfam" id="TIGR00761">
    <property type="entry name" value="argB"/>
    <property type="match status" value="1"/>
</dbReference>
<dbReference type="PANTHER" id="PTHR23342">
    <property type="entry name" value="N-ACETYLGLUTAMATE SYNTHASE"/>
    <property type="match status" value="1"/>
</dbReference>
<dbReference type="PANTHER" id="PTHR23342:SF0">
    <property type="entry name" value="N-ACETYLGLUTAMATE SYNTHASE, MITOCHONDRIAL"/>
    <property type="match status" value="1"/>
</dbReference>
<dbReference type="Pfam" id="PF00696">
    <property type="entry name" value="AA_kinase"/>
    <property type="match status" value="1"/>
</dbReference>
<dbReference type="PIRSF" id="PIRSF000728">
    <property type="entry name" value="NAGK"/>
    <property type="match status" value="1"/>
</dbReference>
<dbReference type="SUPFAM" id="SSF53633">
    <property type="entry name" value="Carbamate kinase-like"/>
    <property type="match status" value="1"/>
</dbReference>
<name>ARGB_BURO0</name>